<organism>
    <name type="scientific">Saccharomyces cerevisiae (strain ATCC 204508 / S288c)</name>
    <name type="common">Baker's yeast</name>
    <dbReference type="NCBI Taxonomy" id="559292"/>
    <lineage>
        <taxon>Eukaryota</taxon>
        <taxon>Fungi</taxon>
        <taxon>Dikarya</taxon>
        <taxon>Ascomycota</taxon>
        <taxon>Saccharomycotina</taxon>
        <taxon>Saccharomycetes</taxon>
        <taxon>Saccharomycetales</taxon>
        <taxon>Saccharomycetaceae</taxon>
        <taxon>Saccharomyces</taxon>
    </lineage>
</organism>
<name>SAP4_YEAST</name>
<protein>
    <recommendedName>
        <fullName>SIT4-associating protein SAP4</fullName>
    </recommendedName>
</protein>
<dbReference type="EMBL" id="U50562">
    <property type="protein sequence ID" value="AAC49305.1"/>
    <property type="molecule type" value="Genomic_DNA"/>
</dbReference>
<dbReference type="EMBL" id="Z72751">
    <property type="protein sequence ID" value="CAA96947.1"/>
    <property type="molecule type" value="Genomic_DNA"/>
</dbReference>
<dbReference type="EMBL" id="Z72750">
    <property type="protein sequence ID" value="CAA96946.1"/>
    <property type="molecule type" value="Genomic_DNA"/>
</dbReference>
<dbReference type="EMBL" id="BK006941">
    <property type="protein sequence ID" value="DAA07889.1"/>
    <property type="molecule type" value="Genomic_DNA"/>
</dbReference>
<dbReference type="PIR" id="S64251">
    <property type="entry name" value="S64251"/>
</dbReference>
<dbReference type="RefSeq" id="NP_011285.1">
    <property type="nucleotide sequence ID" value="NM_001181095.1"/>
</dbReference>
<dbReference type="BioGRID" id="33010">
    <property type="interactions" value="117"/>
</dbReference>
<dbReference type="DIP" id="DIP-1604N"/>
<dbReference type="FunCoup" id="P53036">
    <property type="interactions" value="613"/>
</dbReference>
<dbReference type="IntAct" id="P53036">
    <property type="interactions" value="61"/>
</dbReference>
<dbReference type="MINT" id="P53036"/>
<dbReference type="STRING" id="4932.YGL229C"/>
<dbReference type="iPTMnet" id="P53036"/>
<dbReference type="PaxDb" id="4932-YGL229C"/>
<dbReference type="PeptideAtlas" id="P53036"/>
<dbReference type="EnsemblFungi" id="YGL229C_mRNA">
    <property type="protein sequence ID" value="YGL229C"/>
    <property type="gene ID" value="YGL229C"/>
</dbReference>
<dbReference type="GeneID" id="852622"/>
<dbReference type="KEGG" id="sce:YGL229C"/>
<dbReference type="AGR" id="SGD:S000003198"/>
<dbReference type="SGD" id="S000003198">
    <property type="gene designation" value="SAP4"/>
</dbReference>
<dbReference type="VEuPathDB" id="FungiDB:YGL229C"/>
<dbReference type="eggNOG" id="KOG2073">
    <property type="taxonomic scope" value="Eukaryota"/>
</dbReference>
<dbReference type="GeneTree" id="ENSGT00390000009899"/>
<dbReference type="HOGENOM" id="CLU_003676_2_1_1"/>
<dbReference type="InParanoid" id="P53036"/>
<dbReference type="OMA" id="EYYLIFR"/>
<dbReference type="OrthoDB" id="10259133at2759"/>
<dbReference type="BioCyc" id="YEAST:G3O-30703-MONOMER"/>
<dbReference type="Reactome" id="R-SCE-204005">
    <property type="pathway name" value="COPII-mediated vesicle transport"/>
</dbReference>
<dbReference type="BioGRID-ORCS" id="852622">
    <property type="hits" value="0 hits in 10 CRISPR screens"/>
</dbReference>
<dbReference type="PRO" id="PR:P53036"/>
<dbReference type="Proteomes" id="UP000002311">
    <property type="component" value="Chromosome VII"/>
</dbReference>
<dbReference type="RNAct" id="P53036">
    <property type="molecule type" value="protein"/>
</dbReference>
<dbReference type="GO" id="GO:0005829">
    <property type="term" value="C:cytosol"/>
    <property type="evidence" value="ECO:0000318"/>
    <property type="project" value="GO_Central"/>
</dbReference>
<dbReference type="GO" id="GO:0005739">
    <property type="term" value="C:mitochondrion"/>
    <property type="evidence" value="ECO:0007005"/>
    <property type="project" value="SGD"/>
</dbReference>
<dbReference type="GO" id="GO:0005634">
    <property type="term" value="C:nucleus"/>
    <property type="evidence" value="ECO:0000318"/>
    <property type="project" value="GO_Central"/>
</dbReference>
<dbReference type="GO" id="GO:0019903">
    <property type="term" value="F:protein phosphatase binding"/>
    <property type="evidence" value="ECO:0007669"/>
    <property type="project" value="InterPro"/>
</dbReference>
<dbReference type="GO" id="GO:0019888">
    <property type="term" value="F:protein phosphatase regulator activity"/>
    <property type="evidence" value="ECO:0000318"/>
    <property type="project" value="GO_Central"/>
</dbReference>
<dbReference type="GO" id="GO:0000082">
    <property type="term" value="P:G1/S transition of mitotic cell cycle"/>
    <property type="evidence" value="ECO:0000315"/>
    <property type="project" value="SGD"/>
</dbReference>
<dbReference type="GO" id="GO:0009966">
    <property type="term" value="P:regulation of signal transduction"/>
    <property type="evidence" value="ECO:0000318"/>
    <property type="project" value="GO_Central"/>
</dbReference>
<dbReference type="InterPro" id="IPR007587">
    <property type="entry name" value="SAPS"/>
</dbReference>
<dbReference type="PANTHER" id="PTHR12634">
    <property type="entry name" value="SIT4 YEAST -ASSOCIATING PROTEIN-RELATED"/>
    <property type="match status" value="1"/>
</dbReference>
<dbReference type="PANTHER" id="PTHR12634:SF14">
    <property type="entry name" value="SIT4-ASSOCIATING PROTEIN SAP155-RELATED"/>
    <property type="match status" value="1"/>
</dbReference>
<dbReference type="Pfam" id="PF04499">
    <property type="entry name" value="SAPS"/>
    <property type="match status" value="1"/>
</dbReference>
<proteinExistence type="evidence at protein level"/>
<keyword id="KW-0131">Cell cycle</keyword>
<keyword id="KW-1185">Reference proteome</keyword>
<gene>
    <name type="primary">SAP4</name>
    <name type="ordered locus">YGL229C</name>
</gene>
<reference key="1">
    <citation type="journal article" date="1996" name="Mol. Cell. Biol.">
        <title>The SAPs, a new family of proteins, associate and function positively with the SIT4 phosphatase.</title>
        <authorList>
            <person name="Luke M.M."/>
            <person name="della Seta F."/>
            <person name="di Como C.J."/>
            <person name="Sugimoto H."/>
            <person name="Kobayashi R."/>
            <person name="Arndt K.T."/>
        </authorList>
    </citation>
    <scope>NUCLEOTIDE SEQUENCE [GENOMIC DNA]</scope>
</reference>
<reference key="2">
    <citation type="journal article" date="1997" name="Nature">
        <title>The nucleotide sequence of Saccharomyces cerevisiae chromosome VII.</title>
        <authorList>
            <person name="Tettelin H."/>
            <person name="Agostoni-Carbone M.L."/>
            <person name="Albermann K."/>
            <person name="Albers M."/>
            <person name="Arroyo J."/>
            <person name="Backes U."/>
            <person name="Barreiros T."/>
            <person name="Bertani I."/>
            <person name="Bjourson A.J."/>
            <person name="Brueckner M."/>
            <person name="Bruschi C.V."/>
            <person name="Carignani G."/>
            <person name="Castagnoli L."/>
            <person name="Cerdan E."/>
            <person name="Clemente M.L."/>
            <person name="Coblenz A."/>
            <person name="Coglievina M."/>
            <person name="Coissac E."/>
            <person name="Defoor E."/>
            <person name="Del Bino S."/>
            <person name="Delius H."/>
            <person name="Delneri D."/>
            <person name="de Wergifosse P."/>
            <person name="Dujon B."/>
            <person name="Durand P."/>
            <person name="Entian K.-D."/>
            <person name="Eraso P."/>
            <person name="Escribano V."/>
            <person name="Fabiani L."/>
            <person name="Fartmann B."/>
            <person name="Feroli F."/>
            <person name="Feuermann M."/>
            <person name="Frontali L."/>
            <person name="Garcia-Gonzalez M."/>
            <person name="Garcia-Saez M.I."/>
            <person name="Goffeau A."/>
            <person name="Guerreiro P."/>
            <person name="Hani J."/>
            <person name="Hansen M."/>
            <person name="Hebling U."/>
            <person name="Hernandez K."/>
            <person name="Heumann K."/>
            <person name="Hilger F."/>
            <person name="Hofmann B."/>
            <person name="Indge K.J."/>
            <person name="James C.M."/>
            <person name="Klima R."/>
            <person name="Koetter P."/>
            <person name="Kramer B."/>
            <person name="Kramer W."/>
            <person name="Lauquin G."/>
            <person name="Leuther H."/>
            <person name="Louis E.J."/>
            <person name="Maillier E."/>
            <person name="Marconi A."/>
            <person name="Martegani E."/>
            <person name="Mazon M.J."/>
            <person name="Mazzoni C."/>
            <person name="McReynolds A.D.K."/>
            <person name="Melchioretto P."/>
            <person name="Mewes H.-W."/>
            <person name="Minenkova O."/>
            <person name="Mueller-Auer S."/>
            <person name="Nawrocki A."/>
            <person name="Netter P."/>
            <person name="Neu R."/>
            <person name="Nombela C."/>
            <person name="Oliver S.G."/>
            <person name="Panzeri L."/>
            <person name="Paoluzi S."/>
            <person name="Plevani P."/>
            <person name="Portetelle D."/>
            <person name="Portillo F."/>
            <person name="Potier S."/>
            <person name="Purnelle B."/>
            <person name="Rieger M."/>
            <person name="Riles L."/>
            <person name="Rinaldi T."/>
            <person name="Robben J."/>
            <person name="Rodrigues-Pousada C."/>
            <person name="Rodriguez-Belmonte E."/>
            <person name="Rodriguez-Torres A.M."/>
            <person name="Rose M."/>
            <person name="Ruzzi M."/>
            <person name="Saliola M."/>
            <person name="Sanchez-Perez M."/>
            <person name="Schaefer B."/>
            <person name="Schaefer M."/>
            <person name="Scharfe M."/>
            <person name="Schmidheini T."/>
            <person name="Schreer A."/>
            <person name="Skala J."/>
            <person name="Souciet J.-L."/>
            <person name="Steensma H.Y."/>
            <person name="Talla E."/>
            <person name="Thierry A."/>
            <person name="Vandenbol M."/>
            <person name="van der Aart Q.J.M."/>
            <person name="Van Dyck L."/>
            <person name="Vanoni M."/>
            <person name="Verhasselt P."/>
            <person name="Voet M."/>
            <person name="Volckaert G."/>
            <person name="Wambutt R."/>
            <person name="Watson M.D."/>
            <person name="Weber N."/>
            <person name="Wedler E."/>
            <person name="Wedler H."/>
            <person name="Wipfli P."/>
            <person name="Wolf K."/>
            <person name="Wright L.F."/>
            <person name="Zaccaria P."/>
            <person name="Zimmermann M."/>
            <person name="Zollner A."/>
            <person name="Kleine K."/>
        </authorList>
    </citation>
    <scope>NUCLEOTIDE SEQUENCE [LARGE SCALE GENOMIC DNA]</scope>
    <source>
        <strain>ATCC 204508 / S288c</strain>
    </source>
</reference>
<reference key="3">
    <citation type="journal article" date="2014" name="G3 (Bethesda)">
        <title>The reference genome sequence of Saccharomyces cerevisiae: Then and now.</title>
        <authorList>
            <person name="Engel S.R."/>
            <person name="Dietrich F.S."/>
            <person name="Fisk D.G."/>
            <person name="Binkley G."/>
            <person name="Balakrishnan R."/>
            <person name="Costanzo M.C."/>
            <person name="Dwight S.S."/>
            <person name="Hitz B.C."/>
            <person name="Karra K."/>
            <person name="Nash R.S."/>
            <person name="Weng S."/>
            <person name="Wong E.D."/>
            <person name="Lloyd P."/>
            <person name="Skrzypek M.S."/>
            <person name="Miyasato S.R."/>
            <person name="Simison M."/>
            <person name="Cherry J.M."/>
        </authorList>
    </citation>
    <scope>GENOME REANNOTATION</scope>
    <source>
        <strain>ATCC 204508 / S288c</strain>
    </source>
</reference>
<reference key="4">
    <citation type="journal article" date="2003" name="Nature">
        <title>Global analysis of protein expression in yeast.</title>
        <authorList>
            <person name="Ghaemmaghami S."/>
            <person name="Huh W.-K."/>
            <person name="Bower K."/>
            <person name="Howson R.W."/>
            <person name="Belle A."/>
            <person name="Dephoure N."/>
            <person name="O'Shea E.K."/>
            <person name="Weissman J.S."/>
        </authorList>
    </citation>
    <scope>LEVEL OF PROTEIN EXPRESSION [LARGE SCALE ANALYSIS]</scope>
</reference>
<accession>P53036</accession>
<accession>D6VVA5</accession>
<feature type="chain" id="PRO_0000097585" description="SIT4-associating protein SAP4">
    <location>
        <begin position="1"/>
        <end position="818"/>
    </location>
</feature>
<feature type="region of interest" description="Disordered" evidence="2">
    <location>
        <begin position="33"/>
        <end position="60"/>
    </location>
</feature>
<feature type="region of interest" description="Disordered" evidence="2">
    <location>
        <begin position="499"/>
        <end position="526"/>
    </location>
</feature>
<feature type="compositionally biased region" description="Low complexity" evidence="2">
    <location>
        <begin position="509"/>
        <end position="518"/>
    </location>
</feature>
<sequence>MSLWPFGETLSHSGIDSILEEYYLIFRSLEGNETSSTDDKKNEPSMESESEFGTESRDRSDLNQSFIDRILLETALLDELNGAANDRLVDFICLGYFYDDRSQQVRHMDYLVDMLMAYLKDIDRTGYRTPFLLENSFHQTGEYEDQDDEDPMLYVNIISSIFCSKSAPIVEALVQNTPFLSSLFEVFQFENIEAENCPILAVFLKINETLLFEQTSSYLEFFKSQPNIVDKFLYHIEVSPLVEFLIKIMLTDQVESPTNIIDFLYHQDLIPKCLNLLENSKYSPGIQNSSGELLKALISISTNFKLDTLWIGPNRLTRQLASPQYVDQLINIILFQRGHAMGVAVSIIIELIRKNNSDYDEVDLLSTTIVDNPPSQRDPVYLGHLLYELTMHMEDFYALLIKLENDDDDDHDTASKALPSVKHHLLENQLHESFRPLGFERVKITELISEMLHCSNMGLMNSKRGEKIARTRDKCRDTLDQNSLEKAMKNLNINDNTITSNTLEDKCNNNDSNDSNDNQKQKKNIKKKFHDNELYSTFDTSDDNIDDDDDMSFEIPYVSETQNLKIRKNPTIGDLFKIKLHDLGFFPKFLQLFLRYPWNNFWHNIVFDIIQQIFNGRMDFSYNSFLVYSLFDFKKSTRFIPKPLYGSNQKLPVKDFHIISDFILQGHKDSFEFYEKEKTNLGYMGQLVLIAEEIAKYSKIYKTDLIAPDIYAFLQDEVWMSYSSDILNETRTMCSIILGGGQFCAESDENTNQDFLEKADMSKPAHPSTMDENEIVHEEDVKLHDKVAELIDELGQLTELDIHDKIKDVIVDHHSDLN</sequence>
<evidence type="ECO:0000250" key="1"/>
<evidence type="ECO:0000256" key="2">
    <source>
        <dbReference type="SAM" id="MobiDB-lite"/>
    </source>
</evidence>
<evidence type="ECO:0000269" key="3">
    <source>
    </source>
</evidence>
<evidence type="ECO:0000305" key="4"/>
<comment type="function">
    <text evidence="1">Associates with the SIT4 phosphatase in a cell cycle dependent manner. May be directly or indirectly involved in SIT4-dependent functions in budding and in normal G1 cyclin expression (By similarity).</text>
</comment>
<comment type="PTM">
    <text evidence="1">Hyperphosphorylated in the absence of SIT4.</text>
</comment>
<comment type="miscellaneous">
    <text evidence="3">Present with 279 molecules/cell in log phase SD medium.</text>
</comment>
<comment type="similarity">
    <text evidence="4">Belongs to the SAPS family.</text>
</comment>